<accession>P0ACH5</accession>
<accession>P27246</accession>
<feature type="chain" id="PRO_0000194531" description="Multiple antibiotic resistance protein MarA">
    <location>
        <begin position="1"/>
        <end position="127"/>
    </location>
</feature>
<feature type="domain" description="HTH araC/xylS-type" evidence="1">
    <location>
        <begin position="12"/>
        <end position="110"/>
    </location>
</feature>
<feature type="DNA-binding region" description="H-T-H motif" evidence="1">
    <location>
        <begin position="29"/>
        <end position="50"/>
    </location>
</feature>
<feature type="DNA-binding region" description="H-T-H motif" evidence="1">
    <location>
        <begin position="77"/>
        <end position="100"/>
    </location>
</feature>
<feature type="helix" evidence="3">
    <location>
        <begin position="8"/>
        <end position="19"/>
    </location>
</feature>
<feature type="turn" evidence="3">
    <location>
        <begin position="20"/>
        <end position="23"/>
    </location>
</feature>
<feature type="helix" evidence="3">
    <location>
        <begin position="29"/>
        <end position="34"/>
    </location>
</feature>
<feature type="strand" evidence="3">
    <location>
        <begin position="35"/>
        <end position="37"/>
    </location>
</feature>
<feature type="helix" evidence="3">
    <location>
        <begin position="39"/>
        <end position="50"/>
    </location>
</feature>
<feature type="helix" evidence="3">
    <location>
        <begin position="54"/>
        <end position="72"/>
    </location>
</feature>
<feature type="helix" evidence="3">
    <location>
        <begin position="77"/>
        <end position="83"/>
    </location>
</feature>
<feature type="helix" evidence="3">
    <location>
        <begin position="89"/>
        <end position="100"/>
    </location>
</feature>
<feature type="helix" evidence="3">
    <location>
        <begin position="104"/>
        <end position="108"/>
    </location>
</feature>
<feature type="strand" evidence="4">
    <location>
        <begin position="115"/>
        <end position="117"/>
    </location>
</feature>
<evidence type="ECO:0000255" key="1">
    <source>
        <dbReference type="PROSITE-ProRule" id="PRU00593"/>
    </source>
</evidence>
<evidence type="ECO:0000305" key="2"/>
<evidence type="ECO:0007829" key="3">
    <source>
        <dbReference type="PDB" id="1BL0"/>
    </source>
</evidence>
<evidence type="ECO:0007829" key="4">
    <source>
        <dbReference type="PDB" id="1XS9"/>
    </source>
</evidence>
<sequence>MSRRNTDAITIHSILDWIEDNLESPLSLEKVSERSGYSKWHLQRMFKKETGHSLGQYIRSRKMTEIAQKLKESNEPILYLAERYGFESQQTLTRTFKNYFDVPPHKYRMTNMQGESRFLHPLNHYNS</sequence>
<name>MARA_ECOLI</name>
<comment type="function">
    <text>May be a transcriptional activator of genes involved in the multiple antibiotic resistance (Mar) phenotype. It can also activate genes such as sodA, zwf and micF.</text>
</comment>
<comment type="subunit">
    <text>Monomer.</text>
</comment>
<comment type="induction">
    <text>By various antibiotics or by sodium salicylate.</text>
</comment>
<comment type="sequence caution" evidence="2">
    <conflict type="erroneous initiation">
        <sequence resource="EMBL-CDS" id="AAC16395"/>
    </conflict>
</comment>
<keyword id="KW-0002">3D-structure</keyword>
<keyword id="KW-0010">Activator</keyword>
<keyword id="KW-0046">Antibiotic resistance</keyword>
<keyword id="KW-0238">DNA-binding</keyword>
<keyword id="KW-1185">Reference proteome</keyword>
<keyword id="KW-0677">Repeat</keyword>
<keyword id="KW-0804">Transcription</keyword>
<keyword id="KW-0805">Transcription regulation</keyword>
<reference key="1">
    <citation type="journal article" date="1993" name="J. Bacteriol.">
        <title>Genetic and functional analysis of the multiple antibiotic resistance (mar) locus in Escherichia coli.</title>
        <authorList>
            <person name="Cohen S.P."/>
            <person name="Haechler H."/>
            <person name="Levy S.B."/>
        </authorList>
    </citation>
    <scope>NUCLEOTIDE SEQUENCE [GENOMIC DNA]</scope>
</reference>
<reference key="2">
    <citation type="journal article" date="1993" name="J. Bacteriol.">
        <title>Overexpression of the MarA positive regulator is sufficient to confer multiple antibiotic resistance in Escherichia coli.</title>
        <authorList>
            <person name="Gambino L."/>
            <person name="Gracheck S."/>
            <person name="Miller P.F."/>
        </authorList>
    </citation>
    <scope>NUCLEOTIDE SEQUENCE [GENOMIC DNA]</scope>
    <source>
        <strain>K12</strain>
    </source>
</reference>
<reference key="3">
    <citation type="journal article" date="1996" name="DNA Res.">
        <title>A 570-kb DNA sequence of the Escherichia coli K-12 genome corresponding to the 28.0-40.1 min region on the linkage map.</title>
        <authorList>
            <person name="Aiba H."/>
            <person name="Baba T."/>
            <person name="Fujita K."/>
            <person name="Hayashi K."/>
            <person name="Inada T."/>
            <person name="Isono K."/>
            <person name="Itoh T."/>
            <person name="Kasai H."/>
            <person name="Kashimoto K."/>
            <person name="Kimura S."/>
            <person name="Kitakawa M."/>
            <person name="Kitagawa M."/>
            <person name="Makino K."/>
            <person name="Miki T."/>
            <person name="Mizobuchi K."/>
            <person name="Mori H."/>
            <person name="Mori T."/>
            <person name="Motomura K."/>
            <person name="Nakade S."/>
            <person name="Nakamura Y."/>
            <person name="Nashimoto H."/>
            <person name="Nishio Y."/>
            <person name="Oshima T."/>
            <person name="Saito N."/>
            <person name="Sampei G."/>
            <person name="Seki Y."/>
            <person name="Sivasundaram S."/>
            <person name="Tagami H."/>
            <person name="Takeda J."/>
            <person name="Takemoto K."/>
            <person name="Takeuchi Y."/>
            <person name="Wada C."/>
            <person name="Yamamoto Y."/>
            <person name="Horiuchi T."/>
        </authorList>
    </citation>
    <scope>NUCLEOTIDE SEQUENCE [LARGE SCALE GENOMIC DNA]</scope>
    <source>
        <strain>K12 / W3110 / ATCC 27325 / DSM 5911</strain>
    </source>
</reference>
<reference key="4">
    <citation type="journal article" date="1997" name="Science">
        <title>The complete genome sequence of Escherichia coli K-12.</title>
        <authorList>
            <person name="Blattner F.R."/>
            <person name="Plunkett G. III"/>
            <person name="Bloch C.A."/>
            <person name="Perna N.T."/>
            <person name="Burland V."/>
            <person name="Riley M."/>
            <person name="Collado-Vides J."/>
            <person name="Glasner J.D."/>
            <person name="Rode C.K."/>
            <person name="Mayhew G.F."/>
            <person name="Gregor J."/>
            <person name="Davis N.W."/>
            <person name="Kirkpatrick H.A."/>
            <person name="Goeden M.A."/>
            <person name="Rose D.J."/>
            <person name="Mau B."/>
            <person name="Shao Y."/>
        </authorList>
    </citation>
    <scope>NUCLEOTIDE SEQUENCE [LARGE SCALE GENOMIC DNA]</scope>
    <source>
        <strain>K12 / MG1655 / ATCC 47076</strain>
    </source>
</reference>
<reference key="5">
    <citation type="journal article" date="2006" name="Mol. Syst. Biol.">
        <title>Highly accurate genome sequences of Escherichia coli K-12 strains MG1655 and W3110.</title>
        <authorList>
            <person name="Hayashi K."/>
            <person name="Morooka N."/>
            <person name="Yamamoto Y."/>
            <person name="Fujita K."/>
            <person name="Isono K."/>
            <person name="Choi S."/>
            <person name="Ohtsubo E."/>
            <person name="Baba T."/>
            <person name="Wanner B.L."/>
            <person name="Mori H."/>
            <person name="Horiuchi T."/>
        </authorList>
    </citation>
    <scope>NUCLEOTIDE SEQUENCE [LARGE SCALE GENOMIC DNA]</scope>
    <source>
        <strain>K12 / W3110 / ATCC 27325 / DSM 5911</strain>
    </source>
</reference>
<reference key="6">
    <citation type="journal article" date="1998" name="Proc. Natl. Acad. Sci. U.S.A.">
        <title>A novel DNA-binding motif in MarA: the first structure for an AraC family transcriptional activator.</title>
        <authorList>
            <person name="Rhee S."/>
            <person name="Martin R.G."/>
            <person name="Rosner J.L."/>
            <person name="Davies D.R."/>
        </authorList>
    </citation>
    <scope>X-RAY CRYSTALLOGRAPHY (2.3 ANGSTROMS)</scope>
</reference>
<organism>
    <name type="scientific">Escherichia coli (strain K12)</name>
    <dbReference type="NCBI Taxonomy" id="83333"/>
    <lineage>
        <taxon>Bacteria</taxon>
        <taxon>Pseudomonadati</taxon>
        <taxon>Pseudomonadota</taxon>
        <taxon>Gammaproteobacteria</taxon>
        <taxon>Enterobacterales</taxon>
        <taxon>Enterobacteriaceae</taxon>
        <taxon>Escherichia</taxon>
    </lineage>
</organism>
<gene>
    <name type="primary">marA</name>
    <name type="ordered locus">b1531</name>
    <name type="ordered locus">JW5249</name>
</gene>
<dbReference type="EMBL" id="M96235">
    <property type="protein sequence ID" value="AAC16395.1"/>
    <property type="status" value="ALT_INIT"/>
    <property type="molecule type" value="Genomic_DNA"/>
</dbReference>
<dbReference type="EMBL" id="L06966">
    <property type="protein sequence ID" value="AAA24113.1"/>
    <property type="molecule type" value="Genomic_DNA"/>
</dbReference>
<dbReference type="EMBL" id="U00096">
    <property type="protein sequence ID" value="AAC74604.2"/>
    <property type="molecule type" value="Genomic_DNA"/>
</dbReference>
<dbReference type="EMBL" id="AP009048">
    <property type="protein sequence ID" value="BAA15221.2"/>
    <property type="molecule type" value="Genomic_DNA"/>
</dbReference>
<dbReference type="PIR" id="B47072">
    <property type="entry name" value="B47072"/>
</dbReference>
<dbReference type="RefSeq" id="NP_416048.2">
    <property type="nucleotide sequence ID" value="NC_000913.3"/>
</dbReference>
<dbReference type="RefSeq" id="WP_000091199.1">
    <property type="nucleotide sequence ID" value="NZ_STEB01000003.1"/>
</dbReference>
<dbReference type="PDB" id="1BL0">
    <property type="method" value="X-ray"/>
    <property type="resolution" value="2.30 A"/>
    <property type="chains" value="A=1-127"/>
</dbReference>
<dbReference type="PDB" id="1XS9">
    <property type="method" value="NMR"/>
    <property type="chains" value="A=1-127"/>
</dbReference>
<dbReference type="PDBsum" id="1BL0"/>
<dbReference type="PDBsum" id="1XS9"/>
<dbReference type="SMR" id="P0ACH5"/>
<dbReference type="BioGRID" id="4259110">
    <property type="interactions" value="282"/>
</dbReference>
<dbReference type="DIP" id="DIP-48136N"/>
<dbReference type="FunCoup" id="P0ACH5">
    <property type="interactions" value="89"/>
</dbReference>
<dbReference type="IntAct" id="P0ACH5">
    <property type="interactions" value="1"/>
</dbReference>
<dbReference type="STRING" id="511145.b1531"/>
<dbReference type="PaxDb" id="511145-b1531"/>
<dbReference type="EnsemblBacteria" id="AAC74604">
    <property type="protein sequence ID" value="AAC74604"/>
    <property type="gene ID" value="b1531"/>
</dbReference>
<dbReference type="GeneID" id="93775695"/>
<dbReference type="GeneID" id="947613"/>
<dbReference type="KEGG" id="ecj:JW5249"/>
<dbReference type="KEGG" id="eco:b1531"/>
<dbReference type="KEGG" id="ecoc:C3026_08845"/>
<dbReference type="PATRIC" id="fig|1411691.4.peg.735"/>
<dbReference type="EchoBASE" id="EB1404"/>
<dbReference type="eggNOG" id="COG4977">
    <property type="taxonomic scope" value="Bacteria"/>
</dbReference>
<dbReference type="HOGENOM" id="CLU_000445_81_14_6"/>
<dbReference type="InParanoid" id="P0ACH5"/>
<dbReference type="OMA" id="KFHENIG"/>
<dbReference type="OrthoDB" id="282744at2"/>
<dbReference type="PhylomeDB" id="P0ACH5"/>
<dbReference type="BioCyc" id="EcoCyc:PD00365"/>
<dbReference type="EvolutionaryTrace" id="P0ACH5"/>
<dbReference type="PRO" id="PR:P0ACH5"/>
<dbReference type="Proteomes" id="UP000000625">
    <property type="component" value="Chromosome"/>
</dbReference>
<dbReference type="GO" id="GO:0005829">
    <property type="term" value="C:cytosol"/>
    <property type="evidence" value="ECO:0000318"/>
    <property type="project" value="GO_Central"/>
</dbReference>
<dbReference type="GO" id="GO:0001108">
    <property type="term" value="F:bacterial-type RNA polymerase holo enzyme binding"/>
    <property type="evidence" value="ECO:0000318"/>
    <property type="project" value="GO_Central"/>
</dbReference>
<dbReference type="GO" id="GO:0003677">
    <property type="term" value="F:DNA binding"/>
    <property type="evidence" value="ECO:0000314"/>
    <property type="project" value="EcoCyc"/>
</dbReference>
<dbReference type="GO" id="GO:0003700">
    <property type="term" value="F:DNA-binding transcription factor activity"/>
    <property type="evidence" value="ECO:0007669"/>
    <property type="project" value="InterPro"/>
</dbReference>
<dbReference type="GO" id="GO:0043565">
    <property type="term" value="F:sequence-specific DNA binding"/>
    <property type="evidence" value="ECO:0000318"/>
    <property type="project" value="GO_Central"/>
</dbReference>
<dbReference type="GO" id="GO:0045892">
    <property type="term" value="P:negative regulation of DNA-templated transcription"/>
    <property type="evidence" value="ECO:0000315"/>
    <property type="project" value="EcoCyc"/>
</dbReference>
<dbReference type="GO" id="GO:0045893">
    <property type="term" value="P:positive regulation of DNA-templated transcription"/>
    <property type="evidence" value="ECO:0000314"/>
    <property type="project" value="EcoCyc"/>
</dbReference>
<dbReference type="GO" id="GO:0006355">
    <property type="term" value="P:regulation of DNA-templated transcription"/>
    <property type="evidence" value="ECO:0000318"/>
    <property type="project" value="GO_Central"/>
</dbReference>
<dbReference type="GO" id="GO:0046677">
    <property type="term" value="P:response to antibiotic"/>
    <property type="evidence" value="ECO:0007669"/>
    <property type="project" value="UniProtKB-KW"/>
</dbReference>
<dbReference type="FunFam" id="1.10.10.60:FF:000013">
    <property type="entry name" value="DNA-binding transcriptional activator MarA"/>
    <property type="match status" value="1"/>
</dbReference>
<dbReference type="FunFam" id="1.10.10.60:FF:000196">
    <property type="entry name" value="Multiple antibiotic resistance protein MarA"/>
    <property type="match status" value="1"/>
</dbReference>
<dbReference type="Gene3D" id="1.10.10.60">
    <property type="entry name" value="Homeodomain-like"/>
    <property type="match status" value="2"/>
</dbReference>
<dbReference type="InterPro" id="IPR009057">
    <property type="entry name" value="Homeodomain-like_sf"/>
</dbReference>
<dbReference type="InterPro" id="IPR018060">
    <property type="entry name" value="HTH_AraC"/>
</dbReference>
<dbReference type="InterPro" id="IPR018062">
    <property type="entry name" value="HTH_AraC-typ_CS"/>
</dbReference>
<dbReference type="InterPro" id="IPR050959">
    <property type="entry name" value="MarA-like"/>
</dbReference>
<dbReference type="NCBIfam" id="NF012198">
    <property type="entry name" value="MarA_TF"/>
    <property type="match status" value="1"/>
</dbReference>
<dbReference type="NCBIfam" id="NF008564">
    <property type="entry name" value="PRK11511.1"/>
    <property type="match status" value="1"/>
</dbReference>
<dbReference type="PANTHER" id="PTHR47504:SF4">
    <property type="entry name" value="MULTIPLE ANTIBIOTIC RESISTANCE PROTEIN MARA"/>
    <property type="match status" value="1"/>
</dbReference>
<dbReference type="PANTHER" id="PTHR47504">
    <property type="entry name" value="RIGHT ORIGIN-BINDING PROTEIN"/>
    <property type="match status" value="1"/>
</dbReference>
<dbReference type="Pfam" id="PF12833">
    <property type="entry name" value="HTH_18"/>
    <property type="match status" value="1"/>
</dbReference>
<dbReference type="SMART" id="SM00342">
    <property type="entry name" value="HTH_ARAC"/>
    <property type="match status" value="1"/>
</dbReference>
<dbReference type="SUPFAM" id="SSF46689">
    <property type="entry name" value="Homeodomain-like"/>
    <property type="match status" value="2"/>
</dbReference>
<dbReference type="PROSITE" id="PS00041">
    <property type="entry name" value="HTH_ARAC_FAMILY_1"/>
    <property type="match status" value="1"/>
</dbReference>
<dbReference type="PROSITE" id="PS01124">
    <property type="entry name" value="HTH_ARAC_FAMILY_2"/>
    <property type="match status" value="1"/>
</dbReference>
<protein>
    <recommendedName>
        <fullName>Multiple antibiotic resistance protein MarA</fullName>
    </recommendedName>
</protein>
<proteinExistence type="evidence at protein level"/>